<gene>
    <name type="primary">Rrp1</name>
    <name type="synonym">Nnp1</name>
</gene>
<protein>
    <recommendedName>
        <fullName>Ribosomal RNA processing protein 1 homolog A</fullName>
    </recommendedName>
    <alternativeName>
        <fullName>Novel nuclear protein 1</fullName>
        <shortName>NNP-1</shortName>
    </alternativeName>
    <alternativeName>
        <fullName>Nucleolar protein Nop52</fullName>
    </alternativeName>
    <alternativeName>
        <fullName>RRP1-like protein</fullName>
    </alternativeName>
</protein>
<comment type="function">
    <text evidence="1">Plays a critical role in the generation of 28S rRNA.</text>
</comment>
<comment type="subunit">
    <text evidence="1">Interacts with C1QBP. Interacts with RRP1B.</text>
</comment>
<comment type="subcellular location">
    <subcellularLocation>
        <location evidence="1">Nucleus</location>
        <location evidence="1">Nucleolus</location>
    </subcellularLocation>
</comment>
<comment type="alternative products">
    <event type="alternative splicing"/>
    <isoform>
        <id>P56183-1</id>
        <name>1</name>
        <sequence type="displayed"/>
    </isoform>
    <isoform>
        <id>P56183-2</id>
        <name>2</name>
        <sequence type="described" ref="VSP_004335 VSP_004336"/>
    </isoform>
    <isoform>
        <id>P56183-3</id>
        <name>3</name>
        <sequence type="described" ref="VSP_004337"/>
    </isoform>
</comment>
<comment type="developmental stage">
    <text evidence="3">Embryonic, expression starting between days 1 and 10.</text>
</comment>
<comment type="similarity">
    <text evidence="5">Belongs to the RRP1 family.</text>
</comment>
<dbReference type="EMBL" id="U79773">
    <property type="protein sequence ID" value="AAC53286.1"/>
    <property type="molecule type" value="mRNA"/>
</dbReference>
<dbReference type="EMBL" id="U79774">
    <property type="protein sequence ID" value="AAB63261.1"/>
    <property type="molecule type" value="mRNA"/>
</dbReference>
<dbReference type="EMBL" id="AF294729">
    <property type="protein sequence ID" value="AAF76216.2"/>
    <property type="molecule type" value="Genomic_DNA"/>
</dbReference>
<dbReference type="EMBL" id="AF312394">
    <property type="protein sequence ID" value="AAG30293.1"/>
    <property type="molecule type" value="mRNA"/>
</dbReference>
<dbReference type="EMBL" id="BC065993">
    <property type="protein sequence ID" value="AAH65993.1"/>
    <property type="molecule type" value="mRNA"/>
</dbReference>
<dbReference type="EMBL" id="BC065994">
    <property type="protein sequence ID" value="AAH65994.1"/>
    <property type="molecule type" value="mRNA"/>
</dbReference>
<dbReference type="CCDS" id="CCDS35961.1">
    <molecule id="P56183-1"/>
</dbReference>
<dbReference type="RefSeq" id="NP_035055.2">
    <molecule id="P56183-1"/>
    <property type="nucleotide sequence ID" value="NM_010925.3"/>
</dbReference>
<dbReference type="SMR" id="P56183"/>
<dbReference type="BioGRID" id="201798">
    <property type="interactions" value="24"/>
</dbReference>
<dbReference type="CORUM" id="P56183"/>
<dbReference type="FunCoup" id="P56183">
    <property type="interactions" value="2483"/>
</dbReference>
<dbReference type="STRING" id="10090.ENSMUSP00000058785"/>
<dbReference type="iPTMnet" id="P56183"/>
<dbReference type="PhosphoSitePlus" id="P56183"/>
<dbReference type="SwissPalm" id="P56183"/>
<dbReference type="jPOST" id="P56183"/>
<dbReference type="PaxDb" id="10090-ENSMUSP00000058785"/>
<dbReference type="PeptideAtlas" id="P56183"/>
<dbReference type="ProteomicsDB" id="260849">
    <molecule id="P56183-1"/>
</dbReference>
<dbReference type="ProteomicsDB" id="260850">
    <molecule id="P56183-2"/>
</dbReference>
<dbReference type="ProteomicsDB" id="260851">
    <molecule id="P56183-3"/>
</dbReference>
<dbReference type="Pumba" id="P56183"/>
<dbReference type="Antibodypedia" id="5231">
    <property type="antibodies" value="172 antibodies from 27 providers"/>
</dbReference>
<dbReference type="DNASU" id="18114"/>
<dbReference type="Ensembl" id="ENSMUST00000062678.11">
    <molecule id="P56183-1"/>
    <property type="protein sequence ID" value="ENSMUSP00000058785.10"/>
    <property type="gene ID" value="ENSMUSG00000061032.10"/>
</dbReference>
<dbReference type="GeneID" id="18114"/>
<dbReference type="KEGG" id="mmu:18114"/>
<dbReference type="UCSC" id="uc007fxs.1">
    <molecule id="P56183-1"/>
    <property type="organism name" value="mouse"/>
</dbReference>
<dbReference type="AGR" id="MGI:1203500"/>
<dbReference type="CTD" id="8568"/>
<dbReference type="MGI" id="MGI:1203500">
    <property type="gene designation" value="Rrp1"/>
</dbReference>
<dbReference type="VEuPathDB" id="HostDB:ENSMUSG00000061032"/>
<dbReference type="eggNOG" id="KOG3911">
    <property type="taxonomic scope" value="Eukaryota"/>
</dbReference>
<dbReference type="GeneTree" id="ENSGT00390000011821"/>
<dbReference type="HOGENOM" id="CLU_022876_2_0_1"/>
<dbReference type="InParanoid" id="P56183"/>
<dbReference type="OMA" id="GFWETTV"/>
<dbReference type="OrthoDB" id="2019504at2759"/>
<dbReference type="PhylomeDB" id="P56183"/>
<dbReference type="TreeFam" id="TF315294"/>
<dbReference type="BioGRID-ORCS" id="18114">
    <property type="hits" value="30 hits in 80 CRISPR screens"/>
</dbReference>
<dbReference type="ChiTaRS" id="Rrp1">
    <property type="organism name" value="mouse"/>
</dbReference>
<dbReference type="PRO" id="PR:P56183"/>
<dbReference type="Proteomes" id="UP000000589">
    <property type="component" value="Chromosome 10"/>
</dbReference>
<dbReference type="RNAct" id="P56183">
    <property type="molecule type" value="protein"/>
</dbReference>
<dbReference type="Bgee" id="ENSMUSG00000061032">
    <property type="expression patterns" value="Expressed in dentate gyrus of hippocampal formation granule cell and 273 other cell types or tissues"/>
</dbReference>
<dbReference type="ExpressionAtlas" id="P56183">
    <property type="expression patterns" value="baseline and differential"/>
</dbReference>
<dbReference type="GO" id="GO:0005694">
    <property type="term" value="C:chromosome"/>
    <property type="evidence" value="ECO:0007669"/>
    <property type="project" value="Ensembl"/>
</dbReference>
<dbReference type="GO" id="GO:0005730">
    <property type="term" value="C:nucleolus"/>
    <property type="evidence" value="ECO:0007669"/>
    <property type="project" value="UniProtKB-SubCell"/>
</dbReference>
<dbReference type="GO" id="GO:0030688">
    <property type="term" value="C:preribosome, small subunit precursor"/>
    <property type="evidence" value="ECO:0007669"/>
    <property type="project" value="InterPro"/>
</dbReference>
<dbReference type="GO" id="GO:0006364">
    <property type="term" value="P:rRNA processing"/>
    <property type="evidence" value="ECO:0007669"/>
    <property type="project" value="UniProtKB-KW"/>
</dbReference>
<dbReference type="InterPro" id="IPR010301">
    <property type="entry name" value="RRP1"/>
</dbReference>
<dbReference type="PANTHER" id="PTHR13026">
    <property type="entry name" value="NNP-1 PROTEIN NOVEL NUCLEAR PROTEIN 1 NOP52"/>
    <property type="match status" value="1"/>
</dbReference>
<dbReference type="PANTHER" id="PTHR13026:SF1">
    <property type="entry name" value="RIBOSOMAL RNA PROCESSING PROTEIN 1 HOMOLOG A"/>
    <property type="match status" value="1"/>
</dbReference>
<dbReference type="Pfam" id="PF05997">
    <property type="entry name" value="Nop52"/>
    <property type="match status" value="1"/>
</dbReference>
<proteinExistence type="evidence at protein level"/>
<evidence type="ECO:0000250" key="1">
    <source>
        <dbReference type="UniProtKB" id="P56182"/>
    </source>
</evidence>
<evidence type="ECO:0000256" key="2">
    <source>
        <dbReference type="SAM" id="MobiDB-lite"/>
    </source>
</evidence>
<evidence type="ECO:0000269" key="3">
    <source>
    </source>
</evidence>
<evidence type="ECO:0000303" key="4">
    <source>
    </source>
</evidence>
<evidence type="ECO:0000305" key="5"/>
<evidence type="ECO:0007744" key="6">
    <source>
    </source>
</evidence>
<sequence length="494" mass="54777">MVPGVPLPPEIQLAQRLAGNEQVTRDRALRKLRKYIEARSQRATGGFTPDELLKVWKGLFYCMWMQDKPLQQEELGRTIAQLVHAFHTTEAQHQFLKAFWQTMIREWVGIDRLRLDKFYMLMRMVLSESLKAVKARGWDERQIEQLLELLTTEILNPDSQAPSGVKSHFLEIFLEELAKVGAAELTADQNLQFIDPFCQIAARTKDSQVLHKIIQSIFQTIVEQAPLAIEDIMNELDTQSGEGEASDGDDGEASDGDDGEASDDDDGEASDGGDGDVADSDDSDGADDDDGDVSDGDGGDNDEGDSNKSSEGEQDLQDTPPKKLPAGTAHRAGPEADKEQAWDDEENAGPVLQFDYEALANRLFKLASRQSTPSQNRKRLYKVIQKLRELAGGTFPEDDVPEKAYKKMLEGRRERKKKKKRLPKPQPQNKEAGSEAESSSADPGPGRKRKRNRKTDEKAGQGGPPGKRRKPGARAKGAGAQQPKKRIQSSQSAE</sequence>
<keyword id="KW-0025">Alternative splicing</keyword>
<keyword id="KW-0539">Nucleus</keyword>
<keyword id="KW-0597">Phosphoprotein</keyword>
<keyword id="KW-1185">Reference proteome</keyword>
<keyword id="KW-0698">rRNA processing</keyword>
<organism>
    <name type="scientific">Mus musculus</name>
    <name type="common">Mouse</name>
    <dbReference type="NCBI Taxonomy" id="10090"/>
    <lineage>
        <taxon>Eukaryota</taxon>
        <taxon>Metazoa</taxon>
        <taxon>Chordata</taxon>
        <taxon>Craniata</taxon>
        <taxon>Vertebrata</taxon>
        <taxon>Euteleostomi</taxon>
        <taxon>Mammalia</taxon>
        <taxon>Eutheria</taxon>
        <taxon>Euarchontoglires</taxon>
        <taxon>Glires</taxon>
        <taxon>Rodentia</taxon>
        <taxon>Myomorpha</taxon>
        <taxon>Muroidea</taxon>
        <taxon>Muridae</taxon>
        <taxon>Murinae</taxon>
        <taxon>Mus</taxon>
        <taxon>Mus</taxon>
    </lineage>
</organism>
<name>RRP1_MOUSE</name>
<reference key="1">
    <citation type="journal article" date="1997" name="Genomics">
        <title>The NNP-1 gene (D21S2056E), which encodes a novel nuclear protein, maps in close proximity to the cystatin B gene within the EPM1 and APECED critical region on 21q22.3.</title>
        <authorList>
            <person name="Jansen E."/>
            <person name="Meulemans S.M.P."/>
            <person name="Orlans I.C.R."/>
            <person name="Van de Ven W.J.M."/>
        </authorList>
    </citation>
    <scope>NUCLEOTIDE SEQUENCE [MRNA] (ISOFORMS 1 AND 2)</scope>
    <scope>DEVELOPMENTAL STAGE</scope>
    <source>
        <tissue>Pituitary</tissue>
    </source>
</reference>
<reference key="2">
    <citation type="submission" date="2000-10" db="EMBL/GenBank/DDBJ databases">
        <title>Mouse homologues of human chromosome 21 genes.</title>
        <authorList>
            <person name="Tsyba L."/>
            <person name="Skripkina I."/>
            <person name="Anoprienko O."/>
            <person name="Kvasha S."/>
            <person name="Slavov D."/>
            <person name="Tassone F."/>
            <person name="Rynditch A."/>
            <person name="Gardiner K."/>
        </authorList>
    </citation>
    <scope>NUCLEOTIDE SEQUENCE [GENOMIC DNA / MRNA]</scope>
    <scope>ALTERNATIVE SPLICING</scope>
    <source>
        <strain>129/Ola</strain>
        <tissue>Spleen</tissue>
    </source>
</reference>
<reference key="3">
    <citation type="journal article" date="2004" name="Genome Res.">
        <title>The status, quality, and expansion of the NIH full-length cDNA project: the Mammalian Gene Collection (MGC).</title>
        <authorList>
            <consortium name="The MGC Project Team"/>
        </authorList>
    </citation>
    <scope>NUCLEOTIDE SEQUENCE [LARGE SCALE MRNA] (ISOFORM 1)</scope>
    <source>
        <strain>C57BL/6J</strain>
        <tissue>Brain</tissue>
    </source>
</reference>
<reference key="4">
    <citation type="journal article" date="2010" name="Cell">
        <title>A tissue-specific atlas of mouse protein phosphorylation and expression.</title>
        <authorList>
            <person name="Huttlin E.L."/>
            <person name="Jedrychowski M.P."/>
            <person name="Elias J.E."/>
            <person name="Goswami T."/>
            <person name="Rad R."/>
            <person name="Beausoleil S.A."/>
            <person name="Villen J."/>
            <person name="Haas W."/>
            <person name="Sowa M.E."/>
            <person name="Gygi S.P."/>
        </authorList>
    </citation>
    <scope>PHOSPHORYLATION [LARGE SCALE ANALYSIS] AT SER-434</scope>
    <scope>IDENTIFICATION BY MASS SPECTROMETRY [LARGE SCALE ANALYSIS]</scope>
    <source>
        <tissue>Brain</tissue>
        <tissue>Kidney</tissue>
        <tissue>Liver</tissue>
        <tissue>Lung</tissue>
        <tissue>Spleen</tissue>
        <tissue>Testis</tissue>
    </source>
</reference>
<accession>P56183</accession>
<accession>O35712</accession>
<accession>Q9ERE1</accession>
<accession>Q9JI07</accession>
<accession>Q9JK67</accession>
<accession>Q9JKU2</accession>
<feature type="chain" id="PRO_0000096888" description="Ribosomal RNA processing protein 1 homolog A">
    <location>
        <begin position="1"/>
        <end position="494"/>
    </location>
</feature>
<feature type="region of interest" description="Disordered" evidence="2">
    <location>
        <begin position="239"/>
        <end position="349"/>
    </location>
</feature>
<feature type="region of interest" description="Disordered" evidence="2">
    <location>
        <begin position="388"/>
        <end position="494"/>
    </location>
</feature>
<feature type="compositionally biased region" description="Acidic residues" evidence="2">
    <location>
        <begin position="244"/>
        <end position="304"/>
    </location>
</feature>
<feature type="compositionally biased region" description="Basic and acidic residues" evidence="2">
    <location>
        <begin position="332"/>
        <end position="341"/>
    </location>
</feature>
<feature type="compositionally biased region" description="Basic and acidic residues" evidence="2">
    <location>
        <begin position="401"/>
        <end position="413"/>
    </location>
</feature>
<feature type="compositionally biased region" description="Basic residues" evidence="2">
    <location>
        <begin position="414"/>
        <end position="423"/>
    </location>
</feature>
<feature type="modified residue" description="Phosphoserine" evidence="1">
    <location>
        <position position="254"/>
    </location>
</feature>
<feature type="modified residue" description="Phosphoserine" evidence="6">
    <location>
        <position position="434"/>
    </location>
</feature>
<feature type="modified residue" description="Phosphothreonine" evidence="1">
    <location>
        <position position="455"/>
    </location>
</feature>
<feature type="splice variant" id="VSP_004335" description="In isoform 2." evidence="4">
    <original>ASDGDDGEASDGDD</original>
    <variation>GSDEDDGDDDSDEA</variation>
    <location>
        <begin position="245"/>
        <end position="258"/>
    </location>
</feature>
<feature type="splice variant" id="VSP_004336" description="In isoform 2." evidence="4">
    <location>
        <begin position="259"/>
        <end position="309"/>
    </location>
</feature>
<feature type="splice variant" id="VSP_004337" description="In isoform 3." evidence="5">
    <location>
        <begin position="450"/>
        <end position="484"/>
    </location>
</feature>
<feature type="sequence conflict" description="In Ref. 2; AAG30293." evidence="5" ref="2">
    <original>D</original>
    <variation>C</variation>
    <location>
        <position position="50"/>
    </location>
</feature>